<dbReference type="EC" id="7.-.-.-" evidence="1"/>
<dbReference type="EMBL" id="CP001164">
    <property type="protein sequence ID" value="ACI37587.1"/>
    <property type="molecule type" value="Genomic_DNA"/>
</dbReference>
<dbReference type="RefSeq" id="WP_000231928.1">
    <property type="nucleotide sequence ID" value="NC_011353.1"/>
</dbReference>
<dbReference type="SMR" id="B5Z464"/>
<dbReference type="KEGG" id="ecf:ECH74115_2342"/>
<dbReference type="HOGENOM" id="CLU_042020_0_0_6"/>
<dbReference type="GO" id="GO:0005886">
    <property type="term" value="C:plasma membrane"/>
    <property type="evidence" value="ECO:0007669"/>
    <property type="project" value="UniProtKB-SubCell"/>
</dbReference>
<dbReference type="GO" id="GO:0022900">
    <property type="term" value="P:electron transport chain"/>
    <property type="evidence" value="ECO:0007669"/>
    <property type="project" value="UniProtKB-UniRule"/>
</dbReference>
<dbReference type="GO" id="GO:0055085">
    <property type="term" value="P:transmembrane transport"/>
    <property type="evidence" value="ECO:0007669"/>
    <property type="project" value="InterPro"/>
</dbReference>
<dbReference type="HAMAP" id="MF_00462">
    <property type="entry name" value="RsxD_RnfD"/>
    <property type="match status" value="1"/>
</dbReference>
<dbReference type="InterPro" id="IPR004338">
    <property type="entry name" value="NqrB/RnfD"/>
</dbReference>
<dbReference type="InterPro" id="IPR011303">
    <property type="entry name" value="RnfD_bac"/>
</dbReference>
<dbReference type="NCBIfam" id="NF002011">
    <property type="entry name" value="PRK00816.1"/>
    <property type="match status" value="1"/>
</dbReference>
<dbReference type="NCBIfam" id="TIGR01946">
    <property type="entry name" value="rnfD"/>
    <property type="match status" value="1"/>
</dbReference>
<dbReference type="PANTHER" id="PTHR30578">
    <property type="entry name" value="ELECTRON TRANSPORT COMPLEX PROTEIN RNFD"/>
    <property type="match status" value="1"/>
</dbReference>
<dbReference type="PANTHER" id="PTHR30578:SF0">
    <property type="entry name" value="ION-TRANSLOCATING OXIDOREDUCTASE COMPLEX SUBUNIT D"/>
    <property type="match status" value="1"/>
</dbReference>
<dbReference type="Pfam" id="PF03116">
    <property type="entry name" value="NQR2_RnfD_RnfE"/>
    <property type="match status" value="1"/>
</dbReference>
<keyword id="KW-0997">Cell inner membrane</keyword>
<keyword id="KW-1003">Cell membrane</keyword>
<keyword id="KW-0249">Electron transport</keyword>
<keyword id="KW-0285">Flavoprotein</keyword>
<keyword id="KW-0288">FMN</keyword>
<keyword id="KW-0472">Membrane</keyword>
<keyword id="KW-0597">Phosphoprotein</keyword>
<keyword id="KW-1278">Translocase</keyword>
<keyword id="KW-0812">Transmembrane</keyword>
<keyword id="KW-1133">Transmembrane helix</keyword>
<keyword id="KW-0813">Transport</keyword>
<proteinExistence type="inferred from homology"/>
<feature type="chain" id="PRO_1000191674" description="Ion-translocating oxidoreductase complex subunit D">
    <location>
        <begin position="1"/>
        <end position="352"/>
    </location>
</feature>
<feature type="transmembrane region" description="Helical" evidence="1">
    <location>
        <begin position="20"/>
        <end position="40"/>
    </location>
</feature>
<feature type="transmembrane region" description="Helical" evidence="1">
    <location>
        <begin position="42"/>
        <end position="62"/>
    </location>
</feature>
<feature type="transmembrane region" description="Helical" evidence="1">
    <location>
        <begin position="78"/>
        <end position="109"/>
    </location>
</feature>
<feature type="transmembrane region" description="Helical" evidence="1">
    <location>
        <begin position="123"/>
        <end position="143"/>
    </location>
</feature>
<feature type="transmembrane region" description="Helical" evidence="1">
    <location>
        <begin position="148"/>
        <end position="168"/>
    </location>
</feature>
<feature type="transmembrane region" description="Helical" evidence="1">
    <location>
        <begin position="214"/>
        <end position="234"/>
    </location>
</feature>
<feature type="transmembrane region" description="Helical" evidence="1">
    <location>
        <begin position="242"/>
        <end position="262"/>
    </location>
</feature>
<feature type="transmembrane region" description="Helical" evidence="1">
    <location>
        <begin position="267"/>
        <end position="287"/>
    </location>
</feature>
<feature type="transmembrane region" description="Helical" evidence="1">
    <location>
        <begin position="301"/>
        <end position="321"/>
    </location>
</feature>
<feature type="transmembrane region" description="Helical" evidence="1">
    <location>
        <begin position="322"/>
        <end position="342"/>
    </location>
</feature>
<feature type="modified residue" description="FMN phosphoryl threonine" evidence="1">
    <location>
        <position position="187"/>
    </location>
</feature>
<gene>
    <name evidence="1" type="primary">rsxD</name>
    <name type="synonym">rnfD</name>
    <name type="ordered locus">ECH74115_2342</name>
</gene>
<evidence type="ECO:0000255" key="1">
    <source>
        <dbReference type="HAMAP-Rule" id="MF_00462"/>
    </source>
</evidence>
<reference key="1">
    <citation type="journal article" date="2011" name="Proc. Natl. Acad. Sci. U.S.A.">
        <title>Genomic anatomy of Escherichia coli O157:H7 outbreaks.</title>
        <authorList>
            <person name="Eppinger M."/>
            <person name="Mammel M.K."/>
            <person name="Leclerc J.E."/>
            <person name="Ravel J."/>
            <person name="Cebula T.A."/>
        </authorList>
    </citation>
    <scope>NUCLEOTIDE SEQUENCE [LARGE SCALE GENOMIC DNA]</scope>
    <source>
        <strain>EC4115 / EHEC</strain>
    </source>
</reference>
<accession>B5Z464</accession>
<sequence length="352" mass="38110">MVFRIASSPYTHNQRQTSRIMLLVLLAAVPGIAAQLWFFGWGTLVQILLASVSALLAEALVLKLRKQSVAATLKDNSALLTGLLLAVSIPPLAPWWMVVLGTVFAVIIAKQLYGGLGQNPFNPAMIGYVVLLISFPVQMTSWLPPHEIAVNIPGFIDAIQVIFSGHTASGGDMNTLRLGIDGISQATPLDTFKTSVRAGHSVEQIMQYPIYSGILAGAGWQWVNLAWLAGGVWLLWQKAIRWHIPLSFLVTLALCATLGWLFSPETLAAPQIHLLSGATMLGAFFILTDPVTASTTNRGRLIFGALAGLLVWLIRSFGGYPDGVAFAVLLANITVPLIDYYTRPRVYGHRKG</sequence>
<organism>
    <name type="scientific">Escherichia coli O157:H7 (strain EC4115 / EHEC)</name>
    <dbReference type="NCBI Taxonomy" id="444450"/>
    <lineage>
        <taxon>Bacteria</taxon>
        <taxon>Pseudomonadati</taxon>
        <taxon>Pseudomonadota</taxon>
        <taxon>Gammaproteobacteria</taxon>
        <taxon>Enterobacterales</taxon>
        <taxon>Enterobacteriaceae</taxon>
        <taxon>Escherichia</taxon>
    </lineage>
</organism>
<name>RSXD_ECO5E</name>
<comment type="function">
    <text evidence="1">Part of a membrane-bound complex that couples electron transfer with translocation of ions across the membrane. Required to maintain the reduced state of SoxR.</text>
</comment>
<comment type="cofactor">
    <cofactor evidence="1">
        <name>FMN</name>
        <dbReference type="ChEBI" id="CHEBI:58210"/>
    </cofactor>
</comment>
<comment type="subunit">
    <text evidence="1">The complex is composed of six subunits: RsxA, RsxB, RsxC, RsxD, RsxE and RsxG.</text>
</comment>
<comment type="subcellular location">
    <subcellularLocation>
        <location evidence="1">Cell inner membrane</location>
        <topology evidence="1">Multi-pass membrane protein</topology>
    </subcellularLocation>
</comment>
<comment type="similarity">
    <text evidence="1">Belongs to the NqrB/RnfD family.</text>
</comment>
<protein>
    <recommendedName>
        <fullName evidence="1">Ion-translocating oxidoreductase complex subunit D</fullName>
        <ecNumber evidence="1">7.-.-.-</ecNumber>
    </recommendedName>
    <alternativeName>
        <fullName evidence="1">Rsx electron transport complex subunit D</fullName>
    </alternativeName>
</protein>